<feature type="chain" id="PRO_0000449875" description="Ketoreductase CTB6">
    <location>
        <begin position="1"/>
        <end position="357"/>
    </location>
</feature>
<feature type="binding site" evidence="1">
    <location>
        <position position="172"/>
    </location>
    <ligand>
        <name>NADP(+)</name>
        <dbReference type="ChEBI" id="CHEBI:58349"/>
    </ligand>
</feature>
<accession>A0A2G5ICG8</accession>
<dbReference type="EC" id="1.-.-.-" evidence="2"/>
<dbReference type="EMBL" id="LKMD01000100">
    <property type="protein sequence ID" value="PIB02402.1"/>
    <property type="molecule type" value="Genomic_DNA"/>
</dbReference>
<dbReference type="RefSeq" id="XP_023460062.1">
    <property type="nucleotide sequence ID" value="XM_023593472.2"/>
</dbReference>
<dbReference type="SMR" id="A0A2G5ICG8"/>
<dbReference type="GeneID" id="35424642"/>
<dbReference type="OrthoDB" id="2735536at2759"/>
<dbReference type="Proteomes" id="UP000230605">
    <property type="component" value="Chromosome 1"/>
</dbReference>
<dbReference type="GO" id="GO:0016616">
    <property type="term" value="F:oxidoreductase activity, acting on the CH-OH group of donors, NAD or NADP as acceptor"/>
    <property type="evidence" value="ECO:0007669"/>
    <property type="project" value="TreeGrafter"/>
</dbReference>
<dbReference type="CDD" id="cd05227">
    <property type="entry name" value="AR_SDR_e"/>
    <property type="match status" value="1"/>
</dbReference>
<dbReference type="Gene3D" id="3.40.50.720">
    <property type="entry name" value="NAD(P)-binding Rossmann-like Domain"/>
    <property type="match status" value="1"/>
</dbReference>
<dbReference type="InterPro" id="IPR001509">
    <property type="entry name" value="Epimerase_deHydtase"/>
</dbReference>
<dbReference type="InterPro" id="IPR036291">
    <property type="entry name" value="NAD(P)-bd_dom_sf"/>
</dbReference>
<dbReference type="InterPro" id="IPR050425">
    <property type="entry name" value="NAD(P)_dehydrat-like"/>
</dbReference>
<dbReference type="PANTHER" id="PTHR10366">
    <property type="entry name" value="NAD DEPENDENT EPIMERASE/DEHYDRATASE"/>
    <property type="match status" value="1"/>
</dbReference>
<dbReference type="PANTHER" id="PTHR10366:SF564">
    <property type="entry name" value="STEROL-4-ALPHA-CARBOXYLATE 3-DEHYDROGENASE, DECARBOXYLATING"/>
    <property type="match status" value="1"/>
</dbReference>
<dbReference type="Pfam" id="PF01370">
    <property type="entry name" value="Epimerase"/>
    <property type="match status" value="1"/>
</dbReference>
<dbReference type="SUPFAM" id="SSF51735">
    <property type="entry name" value="NAD(P)-binding Rossmann-fold domains"/>
    <property type="match status" value="1"/>
</dbReference>
<sequence length="357" mass="39532">MADSLVLLTGATGFIGFRILIELLRQGYSVRAVIRSAGKGQWLESRLTAVMKGSDYKDRFETTTVADFVTDGAFDQAAENTSYIIHVASPIVSSDNPDDWEHDFKRVAVKGSIGVLEAAKRSGTVRRVVITSSMVGLFSPKALFAEPSEVPLNAESRIPEMEPPYAHKMLAYQAGKIASINSAEAWIKNEKPAFDLVHMHPSFVTGRDDLATTREDLRKFSSNWHSMQIVLGHKNPIGKPILTCHNDDVARCHVLALDPKVTGNQSFLISCSPEDGSEWDDVKKFVQREFPEAVAQGVLPNDGHMPTVNKGVRFDVRKTEETFGFKHIPYEAQVLDVVKQYLELPEKDEGVEISTTA</sequence>
<protein>
    <recommendedName>
        <fullName evidence="5">Ketoreductase CTB6</fullName>
        <ecNumber evidence="2">1.-.-.-</ecNumber>
    </recommendedName>
    <alternativeName>
        <fullName evidence="5">Cercosporin toxin biosynthesis cluster protein 6</fullName>
    </alternativeName>
</protein>
<organism>
    <name type="scientific">Cercospora beticola</name>
    <name type="common">Sugarbeet leaf spot fungus</name>
    <dbReference type="NCBI Taxonomy" id="122368"/>
    <lineage>
        <taxon>Eukaryota</taxon>
        <taxon>Fungi</taxon>
        <taxon>Dikarya</taxon>
        <taxon>Ascomycota</taxon>
        <taxon>Pezizomycotina</taxon>
        <taxon>Dothideomycetes</taxon>
        <taxon>Dothideomycetidae</taxon>
        <taxon>Mycosphaerellales</taxon>
        <taxon>Mycosphaerellaceae</taxon>
        <taxon>Cercospora</taxon>
    </lineage>
</organism>
<comment type="function">
    <text evidence="2 3 4">Ketoreductase; part of the gene cluster that mediates the biosynthesis of cercosporin, a light-activated, non-host-selective toxin (By similarity). The perylenequinone chromophore of cercosporin absorbs light energy to attain an electronically-activated triplet state and produces active oxygen species such as the hydroxyl radical, superoxide, hydrogen peroxide or singlet oxygen upon reaction with oxygen molecules (PubMed:11701851). These reactive oxygen species cause damage to various cellular components including lipids, proteins and nucleic acids (PubMed:11701851). The first step of cercosporin biosynthesis is performed by the polyketide synthase CTB1 which catalyzes the formation of nor-toralactone (By similarity). The starter unit acyltransferase (SAT) domain of CTB1 initiates polyketide extension by the selective utilization of acetyl-CoA, which is elongated to the heptaketide in the beta-ketoacyl synthase (KS) domain by successive condensations with six malonyl units introduced by the malonyl acyltransferase (MAT) domain. The product template (PT) domain catalyzes C4-C9 and C2-C11 aldol cyclizations and dehydrations to a trihydroxynaphthalene, which is thought to be delivered to the thioesterase (TE) domain for product release (By similarity). The bifunctional enzyme CTB3 then methylates nor-toralactone to toralactone before conducting an unusual oxidative aromatic ring opening (By similarity). The O-methyltransferase CTB2 further methylates the nascent OH-6 of the CBT3 product, blocking further oxidation at this site before the reductase CTB6 reduces the 2-oxopropyl ketone at position C7, giving naphthalene (By similarity). The FAD-dependent monooxygenase CTB5 in concert with the multicopper oxidase CTB12 are responsible for homodimerization of naphthalene with CTB7 installing the dioxepine moiety, finally producing cercosporin (By similarity). The fasciclin domain-containing protein CTB11 might act with CTB5 and CTB12 whereas the roles of CTB9 and CTB10 have still to be elucidated (By similarity).</text>
</comment>
<comment type="pathway">
    <text evidence="2">Mycotoxin biosynthesis.</text>
</comment>
<comment type="similarity">
    <text evidence="6">Belongs to the NAD(P)-dependent epimerase/dehydratase family. Dihydroflavonol-4-reductase subfamily.</text>
</comment>
<evidence type="ECO:0000250" key="1">
    <source>
        <dbReference type="UniProtKB" id="A0A059TC02"/>
    </source>
</evidence>
<evidence type="ECO:0000250" key="2">
    <source>
        <dbReference type="UniProtKB" id="A0ST44"/>
    </source>
</evidence>
<evidence type="ECO:0000250" key="3">
    <source>
        <dbReference type="UniProtKB" id="Q0UHZ9"/>
    </source>
</evidence>
<evidence type="ECO:0000303" key="4">
    <source>
    </source>
</evidence>
<evidence type="ECO:0000303" key="5">
    <source>
    </source>
</evidence>
<evidence type="ECO:0000305" key="6"/>
<name>CTB6_CERBT</name>
<reference key="1">
    <citation type="journal article" date="2018" name="Proc. Natl. Acad. Sci. U.S.A.">
        <title>Gene cluster conservation provides insight into cercosporin biosynthesis and extends production to the genus Colletotrichum.</title>
        <authorList>
            <person name="de Jonge R."/>
            <person name="Ebert M.K."/>
            <person name="Huitt-Roehl C.R."/>
            <person name="Pal P."/>
            <person name="Suttle J.C."/>
            <person name="Spanner R.E."/>
            <person name="Neubauer J.D."/>
            <person name="Jurick W.M. II"/>
            <person name="Stott K.A."/>
            <person name="Secor G.A."/>
            <person name="Thomma B.P.H.J."/>
            <person name="Van de Peer Y."/>
            <person name="Townsend C.A."/>
            <person name="Bolton M.D."/>
        </authorList>
    </citation>
    <scope>NUCLEOTIDE SEQUENCE [LARGE SCALE GENOMIC DNA]</scope>
    <scope>FUNCTION</scope>
    <scope>PATHWAY</scope>
    <source>
        <strain>09-40</strain>
    </source>
</reference>
<reference key="2">
    <citation type="journal article" date="2000" name="Annu. Rev. Phytopathol.">
        <title>The photoactivated cercospora toxin cercosporin: contributions to plant disease and fundamental biology.</title>
        <authorList>
            <person name="Daub M.E."/>
            <person name="Ehrenshaft M."/>
        </authorList>
    </citation>
    <scope>REVIEW ON CERCOSPORIN</scope>
</reference>
<proteinExistence type="inferred from homology"/>
<gene>
    <name evidence="5" type="primary">CTB6</name>
    <name type="ORF">CB0940_00830</name>
</gene>
<keyword id="KW-0521">NADP</keyword>
<keyword id="KW-0560">Oxidoreductase</keyword>